<reference key="1">
    <citation type="journal article" date="2006" name="J. Bacteriol.">
        <title>The Methanosarcina barkeri genome: comparative analysis with Methanosarcina acetivorans and Methanosarcina mazei reveals extensive rearrangement within methanosarcinal genomes.</title>
        <authorList>
            <person name="Maeder D.L."/>
            <person name="Anderson I."/>
            <person name="Brettin T.S."/>
            <person name="Bruce D.C."/>
            <person name="Gilna P."/>
            <person name="Han C.S."/>
            <person name="Lapidus A."/>
            <person name="Metcalf W.W."/>
            <person name="Saunders E."/>
            <person name="Tapia R."/>
            <person name="Sowers K.R."/>
        </authorList>
    </citation>
    <scope>NUCLEOTIDE SEQUENCE [LARGE SCALE GENOMIC DNA]</scope>
    <source>
        <strain>Fusaro / DSM 804</strain>
    </source>
</reference>
<proteinExistence type="inferred from homology"/>
<evidence type="ECO:0000255" key="1">
    <source>
        <dbReference type="HAMAP-Rule" id="MF_00002"/>
    </source>
</evidence>
<protein>
    <recommendedName>
        <fullName evidence="1">Aspartate carbamoyltransferase regulatory chain</fullName>
    </recommendedName>
</protein>
<accession>Q46DA7</accession>
<comment type="function">
    <text evidence="1">Involved in allosteric regulation of aspartate carbamoyltransferase.</text>
</comment>
<comment type="cofactor">
    <cofactor evidence="1">
        <name>Zn(2+)</name>
        <dbReference type="ChEBI" id="CHEBI:29105"/>
    </cofactor>
    <text evidence="1">Binds 1 zinc ion per subunit.</text>
</comment>
<comment type="subunit">
    <text evidence="1">Contains catalytic and regulatory chains.</text>
</comment>
<comment type="similarity">
    <text evidence="1">Belongs to the PyrI family.</text>
</comment>
<dbReference type="EMBL" id="CP000099">
    <property type="protein sequence ID" value="AAZ70135.1"/>
    <property type="molecule type" value="Genomic_DNA"/>
</dbReference>
<dbReference type="SMR" id="Q46DA7"/>
<dbReference type="STRING" id="269797.Mbar_A1167"/>
<dbReference type="PaxDb" id="269797-Mbar_A1167"/>
<dbReference type="KEGG" id="mba:Mbar_A1167"/>
<dbReference type="eggNOG" id="arCOG04229">
    <property type="taxonomic scope" value="Archaea"/>
</dbReference>
<dbReference type="HOGENOM" id="CLU_128576_0_0_2"/>
<dbReference type="OrthoDB" id="7000at2157"/>
<dbReference type="GO" id="GO:0009347">
    <property type="term" value="C:aspartate carbamoyltransferase complex"/>
    <property type="evidence" value="ECO:0007669"/>
    <property type="project" value="InterPro"/>
</dbReference>
<dbReference type="GO" id="GO:0046872">
    <property type="term" value="F:metal ion binding"/>
    <property type="evidence" value="ECO:0007669"/>
    <property type="project" value="UniProtKB-KW"/>
</dbReference>
<dbReference type="GO" id="GO:0006207">
    <property type="term" value="P:'de novo' pyrimidine nucleobase biosynthetic process"/>
    <property type="evidence" value="ECO:0007669"/>
    <property type="project" value="InterPro"/>
</dbReference>
<dbReference type="GO" id="GO:0006221">
    <property type="term" value="P:pyrimidine nucleotide biosynthetic process"/>
    <property type="evidence" value="ECO:0007669"/>
    <property type="project" value="UniProtKB-UniRule"/>
</dbReference>
<dbReference type="Gene3D" id="2.30.30.20">
    <property type="entry name" value="Aspartate carbamoyltransferase regulatory subunit, C-terminal domain"/>
    <property type="match status" value="1"/>
</dbReference>
<dbReference type="Gene3D" id="3.30.70.140">
    <property type="entry name" value="Aspartate carbamoyltransferase regulatory subunit, N-terminal domain"/>
    <property type="match status" value="1"/>
</dbReference>
<dbReference type="HAMAP" id="MF_00002">
    <property type="entry name" value="Asp_carb_tr_reg"/>
    <property type="match status" value="1"/>
</dbReference>
<dbReference type="InterPro" id="IPR020545">
    <property type="entry name" value="Asp_carbamoyltransf_reg_N"/>
</dbReference>
<dbReference type="InterPro" id="IPR002801">
    <property type="entry name" value="Asp_carbamoylTrfase_reg"/>
</dbReference>
<dbReference type="InterPro" id="IPR020542">
    <property type="entry name" value="Asp_carbamoyltrfase_reg_C"/>
</dbReference>
<dbReference type="InterPro" id="IPR036792">
    <property type="entry name" value="Asp_carbatrfase_reg_C_sf"/>
</dbReference>
<dbReference type="InterPro" id="IPR036793">
    <property type="entry name" value="Asp_carbatrfase_reg_N_sf"/>
</dbReference>
<dbReference type="NCBIfam" id="TIGR00240">
    <property type="entry name" value="ATCase_reg"/>
    <property type="match status" value="1"/>
</dbReference>
<dbReference type="PANTHER" id="PTHR35805">
    <property type="entry name" value="ASPARTATE CARBAMOYLTRANSFERASE REGULATORY CHAIN"/>
    <property type="match status" value="1"/>
</dbReference>
<dbReference type="PANTHER" id="PTHR35805:SF1">
    <property type="entry name" value="ASPARTATE CARBAMOYLTRANSFERASE REGULATORY CHAIN"/>
    <property type="match status" value="1"/>
</dbReference>
<dbReference type="Pfam" id="PF01948">
    <property type="entry name" value="PyrI"/>
    <property type="match status" value="1"/>
</dbReference>
<dbReference type="Pfam" id="PF02748">
    <property type="entry name" value="PyrI_C"/>
    <property type="match status" value="1"/>
</dbReference>
<dbReference type="SUPFAM" id="SSF57825">
    <property type="entry name" value="Aspartate carbamoyltransferase, Regulatory-chain, C-terminal domain"/>
    <property type="match status" value="1"/>
</dbReference>
<dbReference type="SUPFAM" id="SSF54893">
    <property type="entry name" value="Aspartate carbamoyltransferase, Regulatory-chain, N-terminal domain"/>
    <property type="match status" value="1"/>
</dbReference>
<gene>
    <name evidence="1" type="primary">pyrI</name>
    <name type="ordered locus">Mbar_A1167</name>
</gene>
<keyword id="KW-0479">Metal-binding</keyword>
<keyword id="KW-0665">Pyrimidine biosynthesis</keyword>
<keyword id="KW-0862">Zinc</keyword>
<sequence>MKEKRDLKIQAIENGTVIDHIKAGQALNVLRILGISSAFRATISFVMNAPGAAGIKDVVKIEGKELSVEELNRIALISPKATINIIRDFKVVQKNKVVLPSYVEGVVRCINPNCISNSSEPIKSKFSVLQSEEEGVTLNCLYCEHVISENIAENLL</sequence>
<name>PYRI_METBF</name>
<organism>
    <name type="scientific">Methanosarcina barkeri (strain Fusaro / DSM 804)</name>
    <dbReference type="NCBI Taxonomy" id="269797"/>
    <lineage>
        <taxon>Archaea</taxon>
        <taxon>Methanobacteriati</taxon>
        <taxon>Methanobacteriota</taxon>
        <taxon>Stenosarchaea group</taxon>
        <taxon>Methanomicrobia</taxon>
        <taxon>Methanosarcinales</taxon>
        <taxon>Methanosarcinaceae</taxon>
        <taxon>Methanosarcina</taxon>
    </lineage>
</organism>
<feature type="chain" id="PRO_1000000036" description="Aspartate carbamoyltransferase regulatory chain">
    <location>
        <begin position="1"/>
        <end position="156"/>
    </location>
</feature>
<feature type="binding site" evidence="1">
    <location>
        <position position="109"/>
    </location>
    <ligand>
        <name>Zn(2+)</name>
        <dbReference type="ChEBI" id="CHEBI:29105"/>
    </ligand>
</feature>
<feature type="binding site" evidence="1">
    <location>
        <position position="114"/>
    </location>
    <ligand>
        <name>Zn(2+)</name>
        <dbReference type="ChEBI" id="CHEBI:29105"/>
    </ligand>
</feature>
<feature type="binding site" evidence="1">
    <location>
        <position position="140"/>
    </location>
    <ligand>
        <name>Zn(2+)</name>
        <dbReference type="ChEBI" id="CHEBI:29105"/>
    </ligand>
</feature>
<feature type="binding site" evidence="1">
    <location>
        <position position="143"/>
    </location>
    <ligand>
        <name>Zn(2+)</name>
        <dbReference type="ChEBI" id="CHEBI:29105"/>
    </ligand>
</feature>